<name>DSRB_SALNS</name>
<reference key="1">
    <citation type="journal article" date="2011" name="J. Bacteriol.">
        <title>Comparative genomics of 28 Salmonella enterica isolates: evidence for CRISPR-mediated adaptive sublineage evolution.</title>
        <authorList>
            <person name="Fricke W.F."/>
            <person name="Mammel M.K."/>
            <person name="McDermott P.F."/>
            <person name="Tartera C."/>
            <person name="White D.G."/>
            <person name="Leclerc J.E."/>
            <person name="Ravel J."/>
            <person name="Cebula T.A."/>
        </authorList>
    </citation>
    <scope>NUCLEOTIDE SEQUENCE [LARGE SCALE GENOMIC DNA]</scope>
    <source>
        <strain>SL254</strain>
    </source>
</reference>
<dbReference type="EMBL" id="CP001113">
    <property type="protein sequence ID" value="ACF61492.1"/>
    <property type="molecule type" value="Genomic_DNA"/>
</dbReference>
<dbReference type="RefSeq" id="WP_000867218.1">
    <property type="nucleotide sequence ID" value="NZ_CCMR01000003.1"/>
</dbReference>
<dbReference type="SMR" id="B4SW90"/>
<dbReference type="KEGG" id="see:SNSL254_A2146"/>
<dbReference type="HOGENOM" id="CLU_189289_0_0_6"/>
<dbReference type="Proteomes" id="UP000008824">
    <property type="component" value="Chromosome"/>
</dbReference>
<dbReference type="HAMAP" id="MF_01549">
    <property type="entry name" value="DsrB"/>
    <property type="match status" value="1"/>
</dbReference>
<dbReference type="InterPro" id="IPR019717">
    <property type="entry name" value="Dextransucrase_DSRB"/>
</dbReference>
<dbReference type="NCBIfam" id="NF007981">
    <property type="entry name" value="PRK10708.1"/>
    <property type="match status" value="1"/>
</dbReference>
<dbReference type="Pfam" id="PF10781">
    <property type="entry name" value="DSRB"/>
    <property type="match status" value="1"/>
</dbReference>
<organism>
    <name type="scientific">Salmonella newport (strain SL254)</name>
    <dbReference type="NCBI Taxonomy" id="423368"/>
    <lineage>
        <taxon>Bacteria</taxon>
        <taxon>Pseudomonadati</taxon>
        <taxon>Pseudomonadota</taxon>
        <taxon>Gammaproteobacteria</taxon>
        <taxon>Enterobacterales</taxon>
        <taxon>Enterobacteriaceae</taxon>
        <taxon>Salmonella</taxon>
    </lineage>
</organism>
<comment type="similarity">
    <text evidence="1">Belongs to the DsrB family.</text>
</comment>
<protein>
    <recommendedName>
        <fullName evidence="1">Protein DsrB</fullName>
    </recommendedName>
</protein>
<gene>
    <name evidence="1" type="primary">dsrB</name>
    <name type="ordered locus">SNSL254_A2146</name>
</gene>
<sequence>MKVNDRVTVKTDGGPRRPGVVLAVEEFSEGTMYLVSLEDYPLGIWFFNESGHQDGIFVEKAEQD</sequence>
<accession>B4SW90</accession>
<feature type="chain" id="PRO_1000146859" description="Protein DsrB">
    <location>
        <begin position="1"/>
        <end position="64"/>
    </location>
</feature>
<evidence type="ECO:0000255" key="1">
    <source>
        <dbReference type="HAMAP-Rule" id="MF_01549"/>
    </source>
</evidence>
<proteinExistence type="inferred from homology"/>